<protein>
    <recommendedName>
        <fullName evidence="1">Large ribosomal subunit protein bL19</fullName>
    </recommendedName>
    <alternativeName>
        <fullName evidence="2">50S ribosomal protein L19</fullName>
    </alternativeName>
</protein>
<name>RL19_CLONN</name>
<keyword id="KW-1185">Reference proteome</keyword>
<keyword id="KW-0687">Ribonucleoprotein</keyword>
<keyword id="KW-0689">Ribosomal protein</keyword>
<sequence length="116" mass="13277">MLDIIKAIEAEQVKTDITEFNVGDTVRVNVRIKEGNKERLQAFEGTVIKRQNGGIRETFTVRRVAYGTGVERTFPVNSPMLESIKVVRRGKVRRSKLYYLRNRVGKAAKVKEALNR</sequence>
<dbReference type="EMBL" id="CP000382">
    <property type="protein sequence ID" value="ABK60830.1"/>
    <property type="molecule type" value="Genomic_DNA"/>
</dbReference>
<dbReference type="RefSeq" id="WP_011722281.1">
    <property type="nucleotide sequence ID" value="NC_008593.1"/>
</dbReference>
<dbReference type="SMR" id="A0Q0X9"/>
<dbReference type="STRING" id="386415.NT01CX_2208"/>
<dbReference type="KEGG" id="cno:NT01CX_2208"/>
<dbReference type="eggNOG" id="COG0335">
    <property type="taxonomic scope" value="Bacteria"/>
</dbReference>
<dbReference type="HOGENOM" id="CLU_103507_2_1_9"/>
<dbReference type="Proteomes" id="UP000008220">
    <property type="component" value="Chromosome"/>
</dbReference>
<dbReference type="GO" id="GO:0022625">
    <property type="term" value="C:cytosolic large ribosomal subunit"/>
    <property type="evidence" value="ECO:0007669"/>
    <property type="project" value="TreeGrafter"/>
</dbReference>
<dbReference type="GO" id="GO:0003735">
    <property type="term" value="F:structural constituent of ribosome"/>
    <property type="evidence" value="ECO:0007669"/>
    <property type="project" value="InterPro"/>
</dbReference>
<dbReference type="GO" id="GO:0006412">
    <property type="term" value="P:translation"/>
    <property type="evidence" value="ECO:0007669"/>
    <property type="project" value="UniProtKB-UniRule"/>
</dbReference>
<dbReference type="FunFam" id="2.30.30.790:FF:000001">
    <property type="entry name" value="50S ribosomal protein L19"/>
    <property type="match status" value="1"/>
</dbReference>
<dbReference type="Gene3D" id="2.30.30.790">
    <property type="match status" value="1"/>
</dbReference>
<dbReference type="HAMAP" id="MF_00402">
    <property type="entry name" value="Ribosomal_bL19"/>
    <property type="match status" value="1"/>
</dbReference>
<dbReference type="InterPro" id="IPR001857">
    <property type="entry name" value="Ribosomal_bL19"/>
</dbReference>
<dbReference type="InterPro" id="IPR018257">
    <property type="entry name" value="Ribosomal_bL19_CS"/>
</dbReference>
<dbReference type="InterPro" id="IPR038657">
    <property type="entry name" value="Ribosomal_bL19_sf"/>
</dbReference>
<dbReference type="InterPro" id="IPR008991">
    <property type="entry name" value="Translation_prot_SH3-like_sf"/>
</dbReference>
<dbReference type="NCBIfam" id="TIGR01024">
    <property type="entry name" value="rplS_bact"/>
    <property type="match status" value="1"/>
</dbReference>
<dbReference type="PANTHER" id="PTHR15680:SF9">
    <property type="entry name" value="LARGE RIBOSOMAL SUBUNIT PROTEIN BL19M"/>
    <property type="match status" value="1"/>
</dbReference>
<dbReference type="PANTHER" id="PTHR15680">
    <property type="entry name" value="RIBOSOMAL PROTEIN L19"/>
    <property type="match status" value="1"/>
</dbReference>
<dbReference type="Pfam" id="PF01245">
    <property type="entry name" value="Ribosomal_L19"/>
    <property type="match status" value="1"/>
</dbReference>
<dbReference type="PIRSF" id="PIRSF002191">
    <property type="entry name" value="Ribosomal_L19"/>
    <property type="match status" value="1"/>
</dbReference>
<dbReference type="PRINTS" id="PR00061">
    <property type="entry name" value="RIBOSOMALL19"/>
</dbReference>
<dbReference type="SUPFAM" id="SSF50104">
    <property type="entry name" value="Translation proteins SH3-like domain"/>
    <property type="match status" value="1"/>
</dbReference>
<dbReference type="PROSITE" id="PS01015">
    <property type="entry name" value="RIBOSOMAL_L19"/>
    <property type="match status" value="1"/>
</dbReference>
<gene>
    <name evidence="1" type="primary">rplS</name>
    <name type="ordered locus">NT01CX_2208</name>
</gene>
<comment type="function">
    <text evidence="1">This protein is located at the 30S-50S ribosomal subunit interface and may play a role in the structure and function of the aminoacyl-tRNA binding site.</text>
</comment>
<comment type="similarity">
    <text evidence="1">Belongs to the bacterial ribosomal protein bL19 family.</text>
</comment>
<accession>A0Q0X9</accession>
<evidence type="ECO:0000255" key="1">
    <source>
        <dbReference type="HAMAP-Rule" id="MF_00402"/>
    </source>
</evidence>
<evidence type="ECO:0000305" key="2"/>
<organism>
    <name type="scientific">Clostridium novyi (strain NT)</name>
    <dbReference type="NCBI Taxonomy" id="386415"/>
    <lineage>
        <taxon>Bacteria</taxon>
        <taxon>Bacillati</taxon>
        <taxon>Bacillota</taxon>
        <taxon>Clostridia</taxon>
        <taxon>Eubacteriales</taxon>
        <taxon>Clostridiaceae</taxon>
        <taxon>Clostridium</taxon>
    </lineage>
</organism>
<reference key="1">
    <citation type="journal article" date="2006" name="Nat. Biotechnol.">
        <title>The genome and transcriptomes of the anti-tumor agent Clostridium novyi-NT.</title>
        <authorList>
            <person name="Bettegowda C."/>
            <person name="Huang X."/>
            <person name="Lin J."/>
            <person name="Cheong I."/>
            <person name="Kohli M."/>
            <person name="Szabo S.A."/>
            <person name="Zhang X."/>
            <person name="Diaz L.A. Jr."/>
            <person name="Velculescu V.E."/>
            <person name="Parmigiani G."/>
            <person name="Kinzler K.W."/>
            <person name="Vogelstein B."/>
            <person name="Zhou S."/>
        </authorList>
    </citation>
    <scope>NUCLEOTIDE SEQUENCE [LARGE SCALE GENOMIC DNA]</scope>
    <source>
        <strain>NT</strain>
    </source>
</reference>
<feature type="chain" id="PRO_1000049664" description="Large ribosomal subunit protein bL19">
    <location>
        <begin position="1"/>
        <end position="116"/>
    </location>
</feature>
<proteinExistence type="inferred from homology"/>